<gene>
    <name type="ordered locus">ACIAD2309</name>
</gene>
<reference key="1">
    <citation type="journal article" date="2004" name="Nucleic Acids Res.">
        <title>Unique features revealed by the genome sequence of Acinetobacter sp. ADP1, a versatile and naturally transformation competent bacterium.</title>
        <authorList>
            <person name="Barbe V."/>
            <person name="Vallenet D."/>
            <person name="Fonknechten N."/>
            <person name="Kreimeyer A."/>
            <person name="Oztas S."/>
            <person name="Labarre L."/>
            <person name="Cruveiller S."/>
            <person name="Robert C."/>
            <person name="Duprat S."/>
            <person name="Wincker P."/>
            <person name="Ornston L.N."/>
            <person name="Weissenbach J."/>
            <person name="Marliere P."/>
            <person name="Cohen G.N."/>
            <person name="Medigue C."/>
        </authorList>
    </citation>
    <scope>NUCLEOTIDE SEQUENCE [LARGE SCALE GENOMIC DNA]</scope>
    <source>
        <strain>ATCC 33305 / BD413 / ADP1</strain>
    </source>
</reference>
<name>Y2309_ACIAD</name>
<feature type="chain" id="PRO_0000375271" description="YcgL domain-containing protein ACIAD2309">
    <location>
        <begin position="1"/>
        <end position="101"/>
    </location>
</feature>
<feature type="domain" description="YcgL" evidence="1">
    <location>
        <begin position="1"/>
        <end position="93"/>
    </location>
</feature>
<proteinExistence type="inferred from homology"/>
<comment type="sequence caution" evidence="2">
    <conflict type="erroneous initiation">
        <sequence resource="EMBL-CDS" id="CAG69093"/>
    </conflict>
</comment>
<evidence type="ECO:0000255" key="1">
    <source>
        <dbReference type="HAMAP-Rule" id="MF_01866"/>
    </source>
</evidence>
<evidence type="ECO:0000305" key="2"/>
<dbReference type="EMBL" id="CR543861">
    <property type="protein sequence ID" value="CAG69093.1"/>
    <property type="status" value="ALT_INIT"/>
    <property type="molecule type" value="Genomic_DNA"/>
</dbReference>
<dbReference type="RefSeq" id="WP_004928039.1">
    <property type="nucleotide sequence ID" value="NC_005966.1"/>
</dbReference>
<dbReference type="SMR" id="Q6FA20"/>
<dbReference type="STRING" id="202950.GCA_001485005_00093"/>
<dbReference type="GeneID" id="45234630"/>
<dbReference type="KEGG" id="aci:ACIAD2309"/>
<dbReference type="eggNOG" id="COG3100">
    <property type="taxonomic scope" value="Bacteria"/>
</dbReference>
<dbReference type="HOGENOM" id="CLU_155118_0_1_6"/>
<dbReference type="OrthoDB" id="7062382at2"/>
<dbReference type="BioCyc" id="ASP62977:ACIAD_RS10565-MONOMER"/>
<dbReference type="Proteomes" id="UP000000430">
    <property type="component" value="Chromosome"/>
</dbReference>
<dbReference type="Gene3D" id="3.10.510.20">
    <property type="entry name" value="YcgL domain"/>
    <property type="match status" value="1"/>
</dbReference>
<dbReference type="HAMAP" id="MF_01866">
    <property type="entry name" value="UPF0745"/>
    <property type="match status" value="1"/>
</dbReference>
<dbReference type="InterPro" id="IPR038068">
    <property type="entry name" value="YcgL-like_sf"/>
</dbReference>
<dbReference type="InterPro" id="IPR027354">
    <property type="entry name" value="YcgL_dom"/>
</dbReference>
<dbReference type="PANTHER" id="PTHR38109">
    <property type="entry name" value="PROTEIN YCGL"/>
    <property type="match status" value="1"/>
</dbReference>
<dbReference type="PANTHER" id="PTHR38109:SF1">
    <property type="entry name" value="PROTEIN YCGL"/>
    <property type="match status" value="1"/>
</dbReference>
<dbReference type="Pfam" id="PF05166">
    <property type="entry name" value="YcgL"/>
    <property type="match status" value="1"/>
</dbReference>
<dbReference type="SUPFAM" id="SSF160191">
    <property type="entry name" value="YcgL-like"/>
    <property type="match status" value="1"/>
</dbReference>
<dbReference type="PROSITE" id="PS51648">
    <property type="entry name" value="YCGL"/>
    <property type="match status" value="1"/>
</dbReference>
<protein>
    <recommendedName>
        <fullName evidence="1">YcgL domain-containing protein ACIAD2309</fullName>
    </recommendedName>
</protein>
<accession>Q6FA20</accession>
<organism>
    <name type="scientific">Acinetobacter baylyi (strain ATCC 33305 / BD413 / ADP1)</name>
    <dbReference type="NCBI Taxonomy" id="62977"/>
    <lineage>
        <taxon>Bacteria</taxon>
        <taxon>Pseudomonadati</taxon>
        <taxon>Pseudomonadota</taxon>
        <taxon>Gammaproteobacteria</taxon>
        <taxon>Moraxellales</taxon>
        <taxon>Moraxellaceae</taxon>
        <taxon>Acinetobacter</taxon>
    </lineage>
</organism>
<sequence length="101" mass="11537">MHCDIYRSSKKDEMYLYIARPDYPNDDVEGQDPLENVPEGIRTVFGKPTFVMHLELSQSRKLARVNVLHVLDSLQTKGFFIQMPPEGFINPSDEPEGLRGA</sequence>